<proteinExistence type="predicted"/>
<accession>P78706</accession>
<accession>Q7SBB8</accession>
<evidence type="ECO:0000256" key="1">
    <source>
        <dbReference type="SAM" id="MobiDB-lite"/>
    </source>
</evidence>
<evidence type="ECO:0000269" key="2">
    <source>
    </source>
</evidence>
<evidence type="ECO:0000305" key="3"/>
<reference key="1">
    <citation type="journal article" date="1996" name="Mol. Cell. Biol.">
        <title>Characterization of rco-1 of Neurospora crassa, a pleiotropic gene affecting growth and development that encodes a homolog of Tup1 of Saccharomyces cerevisiae.</title>
        <authorList>
            <person name="Yamashiro C.T."/>
            <person name="Ebbole D.J."/>
            <person name="Lee B.-U."/>
            <person name="Brown R.E."/>
            <person name="Bourland C."/>
            <person name="Madi L."/>
            <person name="Yanofsky C."/>
        </authorList>
    </citation>
    <scope>NUCLEOTIDE SEQUENCE [GENOMIC DNA]</scope>
    <scope>DISRUPTION PHENOTYPE</scope>
</reference>
<reference key="2">
    <citation type="journal article" date="2003" name="Nature">
        <title>The genome sequence of the filamentous fungus Neurospora crassa.</title>
        <authorList>
            <person name="Galagan J.E."/>
            <person name="Calvo S.E."/>
            <person name="Borkovich K.A."/>
            <person name="Selker E.U."/>
            <person name="Read N.D."/>
            <person name="Jaffe D.B."/>
            <person name="FitzHugh W."/>
            <person name="Ma L.-J."/>
            <person name="Smirnov S."/>
            <person name="Purcell S."/>
            <person name="Rehman B."/>
            <person name="Elkins T."/>
            <person name="Engels R."/>
            <person name="Wang S."/>
            <person name="Nielsen C.B."/>
            <person name="Butler J."/>
            <person name="Endrizzi M."/>
            <person name="Qui D."/>
            <person name="Ianakiev P."/>
            <person name="Bell-Pedersen D."/>
            <person name="Nelson M.A."/>
            <person name="Werner-Washburne M."/>
            <person name="Selitrennikoff C.P."/>
            <person name="Kinsey J.A."/>
            <person name="Braun E.L."/>
            <person name="Zelter A."/>
            <person name="Schulte U."/>
            <person name="Kothe G.O."/>
            <person name="Jedd G."/>
            <person name="Mewes H.-W."/>
            <person name="Staben C."/>
            <person name="Marcotte E."/>
            <person name="Greenberg D."/>
            <person name="Roy A."/>
            <person name="Foley K."/>
            <person name="Naylor J."/>
            <person name="Stange-Thomann N."/>
            <person name="Barrett R."/>
            <person name="Gnerre S."/>
            <person name="Kamal M."/>
            <person name="Kamvysselis M."/>
            <person name="Mauceli E.W."/>
            <person name="Bielke C."/>
            <person name="Rudd S."/>
            <person name="Frishman D."/>
            <person name="Krystofova S."/>
            <person name="Rasmussen C."/>
            <person name="Metzenberg R.L."/>
            <person name="Perkins D.D."/>
            <person name="Kroken S."/>
            <person name="Cogoni C."/>
            <person name="Macino G."/>
            <person name="Catcheside D.E.A."/>
            <person name="Li W."/>
            <person name="Pratt R.J."/>
            <person name="Osmani S.A."/>
            <person name="DeSouza C.P.C."/>
            <person name="Glass N.L."/>
            <person name="Orbach M.J."/>
            <person name="Berglund J.A."/>
            <person name="Voelker R."/>
            <person name="Yarden O."/>
            <person name="Plamann M."/>
            <person name="Seiler S."/>
            <person name="Dunlap J.C."/>
            <person name="Radford A."/>
            <person name="Aramayo R."/>
            <person name="Natvig D.O."/>
            <person name="Alex L.A."/>
            <person name="Mannhaupt G."/>
            <person name="Ebbole D.J."/>
            <person name="Freitag M."/>
            <person name="Paulsen I."/>
            <person name="Sachs M.S."/>
            <person name="Lander E.S."/>
            <person name="Nusbaum C."/>
            <person name="Birren B.W."/>
        </authorList>
    </citation>
    <scope>NUCLEOTIDE SEQUENCE [LARGE SCALE GENOMIC DNA]</scope>
    <source>
        <strain>ATCC 24698 / 74-OR23-1A / CBS 708.71 / DSM 1257 / FGSC 987</strain>
    </source>
</reference>
<name>RCO1_NEUCR</name>
<comment type="function">
    <text>Represses transcription by RNA polymerase II. May be involved at several stages of conidiation and other growth and development processes. Appears to regulate genes that are expressed in asexual and sexual spore pathways.</text>
</comment>
<comment type="disruption phenotype">
    <text evidence="2">Mutant are aconidial, female sterile, have reduced growth rates and form hyphae that coil in a counterclockwise direction, opposite to that of the wild-type.</text>
</comment>
<sequence>MSMYPHRPIAGAPIQNMGRLNELLDGIRMEFESQARQYETCQHDLATQLQELQVIREKVFQMEQHQMNVKQKYEDEIALLRRQLEARGGAPGNMNPPPQHPGQQQPPAIGLGSNVFSAIMAGQGGQALVPPPPPPQQQEQPAHMPAPPGLQGPPPPPPPPSQQPPFQQQYQGPQGPGNFPPQPPQSTASPGPAGKRGIGRPPAGGPATPQINTPIPYNGGPAQSPQVPTHPTPDHTRMAQHHQPPPPPPSQTNALSELDPDRLPNHIKKMKDDWWVIFNAAVPRVLDVELVHTLQHESVVCCVRFSMDGKYVATGCNRSAQIYDVETGEKLCILQDENIDLTGDLYIRSVCFSPDGKYLATGAEDKLIRVWDIQSRTIRNTFHGHEQDIYSLDFSRDGRTIASGSGDRTVRLWDIETGQNTSVLSIEDGVTTVAISPDKQFVAAGSLDKSVRVWDMRGYLAERLEGPDGHKDSVYSVAFSPDGRNLVSGSLDKTIKMWELSAPRGIPSSAPPKGGRCIKTFEGHRDFVLSVALTPDSQWVLSGSKDRGVQFWDPRTGHTQLMLQGHKNSVISVAPSPVTGPNGVGYFATGSGDMRARIWSYSRI</sequence>
<gene>
    <name type="primary">rco-1</name>
    <name type="ORF">NCU06205</name>
</gene>
<keyword id="KW-0183">Conidiation</keyword>
<keyword id="KW-1185">Reference proteome</keyword>
<keyword id="KW-0677">Repeat</keyword>
<keyword id="KW-0678">Repressor</keyword>
<keyword id="KW-0749">Sporulation</keyword>
<keyword id="KW-0804">Transcription</keyword>
<keyword id="KW-0805">Transcription regulation</keyword>
<keyword id="KW-0853">WD repeat</keyword>
<dbReference type="EMBL" id="U57061">
    <property type="protein sequence ID" value="AAB37245.1"/>
    <property type="molecule type" value="Genomic_DNA"/>
</dbReference>
<dbReference type="EMBL" id="CM002238">
    <property type="protein sequence ID" value="EAA33685.1"/>
    <property type="molecule type" value="Genomic_DNA"/>
</dbReference>
<dbReference type="RefSeq" id="XP_962921.1">
    <property type="nucleotide sequence ID" value="XM_957828.3"/>
</dbReference>
<dbReference type="SMR" id="P78706"/>
<dbReference type="FunCoup" id="P78706">
    <property type="interactions" value="1501"/>
</dbReference>
<dbReference type="STRING" id="367110.P78706"/>
<dbReference type="PaxDb" id="5141-EFNCRP00000006007"/>
<dbReference type="EnsemblFungi" id="EAA33685">
    <property type="protein sequence ID" value="EAA33685"/>
    <property type="gene ID" value="NCU06205"/>
</dbReference>
<dbReference type="GeneID" id="3879069"/>
<dbReference type="KEGG" id="ncr:NCU06205"/>
<dbReference type="VEuPathDB" id="FungiDB:NCU06205"/>
<dbReference type="HOGENOM" id="CLU_000288_57_23_1"/>
<dbReference type="InParanoid" id="P78706"/>
<dbReference type="OMA" id="LTPDANW"/>
<dbReference type="OrthoDB" id="17410at2759"/>
<dbReference type="Proteomes" id="UP000001805">
    <property type="component" value="Chromosome 3, Linkage Group III"/>
</dbReference>
<dbReference type="GO" id="GO:0005634">
    <property type="term" value="C:nucleus"/>
    <property type="evidence" value="ECO:0007669"/>
    <property type="project" value="EnsemblFungi"/>
</dbReference>
<dbReference type="GO" id="GO:0017053">
    <property type="term" value="C:transcription repressor complex"/>
    <property type="evidence" value="ECO:0007669"/>
    <property type="project" value="EnsemblFungi"/>
</dbReference>
<dbReference type="GO" id="GO:0042393">
    <property type="term" value="F:histone binding"/>
    <property type="evidence" value="ECO:0007669"/>
    <property type="project" value="EnsemblFungi"/>
</dbReference>
<dbReference type="GO" id="GO:0042826">
    <property type="term" value="F:histone deacetylase binding"/>
    <property type="evidence" value="ECO:0007669"/>
    <property type="project" value="EnsemblFungi"/>
</dbReference>
<dbReference type="GO" id="GO:0036033">
    <property type="term" value="F:mediator complex binding"/>
    <property type="evidence" value="ECO:0007669"/>
    <property type="project" value="EnsemblFungi"/>
</dbReference>
<dbReference type="GO" id="GO:0080025">
    <property type="term" value="F:phosphatidylinositol-3,5-bisphosphate binding"/>
    <property type="evidence" value="ECO:0007669"/>
    <property type="project" value="EnsemblFungi"/>
</dbReference>
<dbReference type="GO" id="GO:0003714">
    <property type="term" value="F:transcription corepressor activity"/>
    <property type="evidence" value="ECO:0007669"/>
    <property type="project" value="EnsemblFungi"/>
</dbReference>
<dbReference type="GO" id="GO:0048315">
    <property type="term" value="P:conidium formation"/>
    <property type="evidence" value="ECO:0007669"/>
    <property type="project" value="UniProtKB-KW"/>
</dbReference>
<dbReference type="GO" id="GO:0006974">
    <property type="term" value="P:DNA damage response"/>
    <property type="evidence" value="ECO:0007669"/>
    <property type="project" value="EnsemblFungi"/>
</dbReference>
<dbReference type="GO" id="GO:0006972">
    <property type="term" value="P:hyperosmotic response"/>
    <property type="evidence" value="ECO:0007669"/>
    <property type="project" value="EnsemblFungi"/>
</dbReference>
<dbReference type="GO" id="GO:0000278">
    <property type="term" value="P:mitotic cell cycle"/>
    <property type="evidence" value="ECO:0007669"/>
    <property type="project" value="EnsemblFungi"/>
</dbReference>
<dbReference type="GO" id="GO:2000879">
    <property type="term" value="P:negative regulation of dipeptide transport"/>
    <property type="evidence" value="ECO:0007669"/>
    <property type="project" value="EnsemblFungi"/>
</dbReference>
<dbReference type="GO" id="GO:0000122">
    <property type="term" value="P:negative regulation of transcription by RNA polymerase II"/>
    <property type="evidence" value="ECO:0007669"/>
    <property type="project" value="EnsemblFungi"/>
</dbReference>
<dbReference type="GO" id="GO:0045944">
    <property type="term" value="P:positive regulation of transcription by RNA polymerase II"/>
    <property type="evidence" value="ECO:0007669"/>
    <property type="project" value="EnsemblFungi"/>
</dbReference>
<dbReference type="GO" id="GO:0042304">
    <property type="term" value="P:regulation of fatty acid biosynthetic process"/>
    <property type="evidence" value="ECO:0007669"/>
    <property type="project" value="EnsemblFungi"/>
</dbReference>
<dbReference type="GO" id="GO:0030435">
    <property type="term" value="P:sporulation resulting in formation of a cellular spore"/>
    <property type="evidence" value="ECO:0007669"/>
    <property type="project" value="UniProtKB-KW"/>
</dbReference>
<dbReference type="CDD" id="cd00200">
    <property type="entry name" value="WD40"/>
    <property type="match status" value="1"/>
</dbReference>
<dbReference type="FunFam" id="2.130.10.10:FF:000111">
    <property type="entry name" value="Transcriptional repressor rco-1"/>
    <property type="match status" value="1"/>
</dbReference>
<dbReference type="Gene3D" id="1.20.5.340">
    <property type="match status" value="1"/>
</dbReference>
<dbReference type="Gene3D" id="2.130.10.10">
    <property type="entry name" value="YVTN repeat-like/Quinoprotein amine dehydrogenase"/>
    <property type="match status" value="1"/>
</dbReference>
<dbReference type="InterPro" id="IPR020472">
    <property type="entry name" value="G-protein_beta_WD-40_rep"/>
</dbReference>
<dbReference type="InterPro" id="IPR013890">
    <property type="entry name" value="Tscrpt_rep_Tup1_N"/>
</dbReference>
<dbReference type="InterPro" id="IPR015943">
    <property type="entry name" value="WD40/YVTN_repeat-like_dom_sf"/>
</dbReference>
<dbReference type="InterPro" id="IPR019775">
    <property type="entry name" value="WD40_repeat_CS"/>
</dbReference>
<dbReference type="InterPro" id="IPR036322">
    <property type="entry name" value="WD40_repeat_dom_sf"/>
</dbReference>
<dbReference type="InterPro" id="IPR001680">
    <property type="entry name" value="WD40_rpt"/>
</dbReference>
<dbReference type="PANTHER" id="PTHR19846:SF0">
    <property type="entry name" value="PRE-MRNA PROCESSING FACTOR 4"/>
    <property type="match status" value="1"/>
</dbReference>
<dbReference type="PANTHER" id="PTHR19846">
    <property type="entry name" value="WD40 REPEAT PROTEIN"/>
    <property type="match status" value="1"/>
</dbReference>
<dbReference type="Pfam" id="PF08581">
    <property type="entry name" value="Tup_N"/>
    <property type="match status" value="1"/>
</dbReference>
<dbReference type="Pfam" id="PF00400">
    <property type="entry name" value="WD40"/>
    <property type="match status" value="7"/>
</dbReference>
<dbReference type="PRINTS" id="PR00320">
    <property type="entry name" value="GPROTEINBRPT"/>
</dbReference>
<dbReference type="SMART" id="SM00320">
    <property type="entry name" value="WD40"/>
    <property type="match status" value="7"/>
</dbReference>
<dbReference type="SUPFAM" id="SSF50978">
    <property type="entry name" value="WD40 repeat-like"/>
    <property type="match status" value="1"/>
</dbReference>
<dbReference type="PROSITE" id="PS00678">
    <property type="entry name" value="WD_REPEATS_1"/>
    <property type="match status" value="4"/>
</dbReference>
<dbReference type="PROSITE" id="PS50082">
    <property type="entry name" value="WD_REPEATS_2"/>
    <property type="match status" value="6"/>
</dbReference>
<dbReference type="PROSITE" id="PS50294">
    <property type="entry name" value="WD_REPEATS_REGION"/>
    <property type="match status" value="1"/>
</dbReference>
<protein>
    <recommendedName>
        <fullName>Transcriptional repressor rco-1</fullName>
    </recommendedName>
</protein>
<feature type="chain" id="PRO_0000051197" description="Transcriptional repressor rco-1">
    <location>
        <begin position="1"/>
        <end position="604"/>
    </location>
</feature>
<feature type="repeat" description="WD 1">
    <location>
        <begin position="295"/>
        <end position="324"/>
    </location>
</feature>
<feature type="repeat" description="WD 2">
    <location>
        <begin position="342"/>
        <end position="372"/>
    </location>
</feature>
<feature type="repeat" description="WD 3">
    <location>
        <begin position="384"/>
        <end position="414"/>
    </location>
</feature>
<feature type="repeat" description="WD 4">
    <location>
        <begin position="425"/>
        <end position="455"/>
    </location>
</feature>
<feature type="repeat" description="WD 5">
    <location>
        <begin position="469"/>
        <end position="499"/>
    </location>
</feature>
<feature type="repeat" description="WD 6">
    <location>
        <begin position="523"/>
        <end position="553"/>
    </location>
</feature>
<feature type="repeat" description="WD 7">
    <location>
        <begin position="565"/>
        <end position="600"/>
    </location>
</feature>
<feature type="region of interest" description="Disordered" evidence="1">
    <location>
        <begin position="87"/>
        <end position="110"/>
    </location>
</feature>
<feature type="region of interest" description="Disordered" evidence="1">
    <location>
        <begin position="124"/>
        <end position="264"/>
    </location>
</feature>
<feature type="compositionally biased region" description="Pro residues" evidence="1">
    <location>
        <begin position="144"/>
        <end position="163"/>
    </location>
</feature>
<feature type="compositionally biased region" description="Low complexity" evidence="1">
    <location>
        <begin position="164"/>
        <end position="177"/>
    </location>
</feature>
<feature type="compositionally biased region" description="Low complexity" evidence="1">
    <location>
        <begin position="190"/>
        <end position="209"/>
    </location>
</feature>
<feature type="compositionally biased region" description="Polar residues" evidence="1">
    <location>
        <begin position="210"/>
        <end position="229"/>
    </location>
</feature>
<feature type="sequence conflict" description="In Ref. 1; AAB37245." evidence="3" ref="1">
    <original>P</original>
    <variation>S</variation>
    <location>
        <position position="581"/>
    </location>
</feature>
<organism>
    <name type="scientific">Neurospora crassa (strain ATCC 24698 / 74-OR23-1A / CBS 708.71 / DSM 1257 / FGSC 987)</name>
    <dbReference type="NCBI Taxonomy" id="367110"/>
    <lineage>
        <taxon>Eukaryota</taxon>
        <taxon>Fungi</taxon>
        <taxon>Dikarya</taxon>
        <taxon>Ascomycota</taxon>
        <taxon>Pezizomycotina</taxon>
        <taxon>Sordariomycetes</taxon>
        <taxon>Sordariomycetidae</taxon>
        <taxon>Sordariales</taxon>
        <taxon>Sordariaceae</taxon>
        <taxon>Neurospora</taxon>
    </lineage>
</organism>